<evidence type="ECO:0000255" key="1">
    <source>
        <dbReference type="HAMAP-Rule" id="MF_03140"/>
    </source>
</evidence>
<evidence type="ECO:0000256" key="2">
    <source>
        <dbReference type="SAM" id="MobiDB-lite"/>
    </source>
</evidence>
<sequence>MGIKGLSKLLARYAPKSMKEGKIDQYSGRVIAIDASILVYQFISAVRDTTGATMVDEFGETTSHIIGTFYRTIKLIESGIKPIYVFDGKPPEMKDGELHKRKENAQKAQEQLDKALEEGDKEQAKKLMKRTARMTKEQSDEVKKLLQLMGIPCIEANCEAEGTCAALVKAGKCYATATEDMDALTLGSEHVVRKFSANDNKKDPIREYSLSSILEETGFTMEQFIDLCILLGCDYCETIKGVGPITAFELIQQYKSIENILQHLSDKYKVPENWKYKEARELFLHPDVADFSDYKLEWNKIDEEGIKKYLVTEKHFNEERVSKGIEKLKNVKSKKAQGRLDSFFNVKKVPLSKSEAASGVKRKKPTTKAKESRKKK</sequence>
<dbReference type="EC" id="3.1.-.-" evidence="1"/>
<dbReference type="EMBL" id="DS571299">
    <property type="protein sequence ID" value="EAL45884.1"/>
    <property type="molecule type" value="Genomic_DNA"/>
</dbReference>
<dbReference type="RefSeq" id="XP_651270.1">
    <property type="nucleotide sequence ID" value="XM_646178.1"/>
</dbReference>
<dbReference type="SMR" id="C4M6G8"/>
<dbReference type="FunCoup" id="C4M6G8">
    <property type="interactions" value="817"/>
</dbReference>
<dbReference type="STRING" id="5759.C4M6G8"/>
<dbReference type="GeneID" id="3405575"/>
<dbReference type="KEGG" id="ehi:EHI_099740"/>
<dbReference type="VEuPathDB" id="AmoebaDB:EHI5A_026890"/>
<dbReference type="VEuPathDB" id="AmoebaDB:EHI7A_012140"/>
<dbReference type="VEuPathDB" id="AmoebaDB:EHI8A_236100"/>
<dbReference type="VEuPathDB" id="AmoebaDB:EHI_099740"/>
<dbReference type="VEuPathDB" id="AmoebaDB:KM1_028330"/>
<dbReference type="eggNOG" id="KOG2519">
    <property type="taxonomic scope" value="Eukaryota"/>
</dbReference>
<dbReference type="InParanoid" id="C4M6G8"/>
<dbReference type="OMA" id="MGIPWVQ"/>
<dbReference type="OrthoDB" id="1937206at2759"/>
<dbReference type="Proteomes" id="UP000001926">
    <property type="component" value="Partially assembled WGS sequence"/>
</dbReference>
<dbReference type="GO" id="GO:0005739">
    <property type="term" value="C:mitochondrion"/>
    <property type="evidence" value="ECO:0007669"/>
    <property type="project" value="UniProtKB-SubCell"/>
</dbReference>
<dbReference type="GO" id="GO:0005730">
    <property type="term" value="C:nucleolus"/>
    <property type="evidence" value="ECO:0007669"/>
    <property type="project" value="UniProtKB-SubCell"/>
</dbReference>
<dbReference type="GO" id="GO:0005654">
    <property type="term" value="C:nucleoplasm"/>
    <property type="evidence" value="ECO:0007669"/>
    <property type="project" value="UniProtKB-SubCell"/>
</dbReference>
<dbReference type="GO" id="GO:0005634">
    <property type="term" value="C:nucleus"/>
    <property type="evidence" value="ECO:0000318"/>
    <property type="project" value="GO_Central"/>
</dbReference>
<dbReference type="GO" id="GO:0008409">
    <property type="term" value="F:5'-3' exonuclease activity"/>
    <property type="evidence" value="ECO:0000318"/>
    <property type="project" value="GO_Central"/>
</dbReference>
<dbReference type="GO" id="GO:0017108">
    <property type="term" value="F:5'-flap endonuclease activity"/>
    <property type="evidence" value="ECO:0000318"/>
    <property type="project" value="GO_Central"/>
</dbReference>
<dbReference type="GO" id="GO:0003677">
    <property type="term" value="F:DNA binding"/>
    <property type="evidence" value="ECO:0007669"/>
    <property type="project" value="UniProtKB-UniRule"/>
</dbReference>
<dbReference type="GO" id="GO:0000287">
    <property type="term" value="F:magnesium ion binding"/>
    <property type="evidence" value="ECO:0007669"/>
    <property type="project" value="UniProtKB-UniRule"/>
</dbReference>
<dbReference type="GO" id="GO:0006284">
    <property type="term" value="P:base-excision repair"/>
    <property type="evidence" value="ECO:0007669"/>
    <property type="project" value="UniProtKB-UniRule"/>
</dbReference>
<dbReference type="GO" id="GO:0043137">
    <property type="term" value="P:DNA replication, removal of RNA primer"/>
    <property type="evidence" value="ECO:0007669"/>
    <property type="project" value="UniProtKB-UniRule"/>
</dbReference>
<dbReference type="CDD" id="cd09907">
    <property type="entry name" value="H3TH_FEN1-Euk"/>
    <property type="match status" value="1"/>
</dbReference>
<dbReference type="CDD" id="cd09867">
    <property type="entry name" value="PIN_FEN1"/>
    <property type="match status" value="1"/>
</dbReference>
<dbReference type="FunFam" id="1.10.150.20:FF:000009">
    <property type="entry name" value="Flap endonuclease 1"/>
    <property type="match status" value="1"/>
</dbReference>
<dbReference type="FunFam" id="3.40.50.1010:FF:000016">
    <property type="entry name" value="Flap endonuclease 1"/>
    <property type="match status" value="1"/>
</dbReference>
<dbReference type="Gene3D" id="1.10.150.20">
    <property type="entry name" value="5' to 3' exonuclease, C-terminal subdomain"/>
    <property type="match status" value="1"/>
</dbReference>
<dbReference type="Gene3D" id="3.40.50.1010">
    <property type="entry name" value="5'-nuclease"/>
    <property type="match status" value="1"/>
</dbReference>
<dbReference type="HAMAP" id="MF_00614">
    <property type="entry name" value="Fen"/>
    <property type="match status" value="1"/>
</dbReference>
<dbReference type="InterPro" id="IPR002421">
    <property type="entry name" value="5-3_exonuclease"/>
</dbReference>
<dbReference type="InterPro" id="IPR036279">
    <property type="entry name" value="5-3_exonuclease_C_sf"/>
</dbReference>
<dbReference type="InterPro" id="IPR023426">
    <property type="entry name" value="Flap_endonuc"/>
</dbReference>
<dbReference type="InterPro" id="IPR008918">
    <property type="entry name" value="HhH2"/>
</dbReference>
<dbReference type="InterPro" id="IPR029060">
    <property type="entry name" value="PIN-like_dom_sf"/>
</dbReference>
<dbReference type="InterPro" id="IPR006086">
    <property type="entry name" value="XPG-I_dom"/>
</dbReference>
<dbReference type="InterPro" id="IPR006084">
    <property type="entry name" value="XPG/Rad2"/>
</dbReference>
<dbReference type="InterPro" id="IPR019974">
    <property type="entry name" value="XPG_CS"/>
</dbReference>
<dbReference type="InterPro" id="IPR006085">
    <property type="entry name" value="XPG_DNA_repair_N"/>
</dbReference>
<dbReference type="PANTHER" id="PTHR11081:SF9">
    <property type="entry name" value="FLAP ENDONUCLEASE 1"/>
    <property type="match status" value="1"/>
</dbReference>
<dbReference type="PANTHER" id="PTHR11081">
    <property type="entry name" value="FLAP ENDONUCLEASE FAMILY MEMBER"/>
    <property type="match status" value="1"/>
</dbReference>
<dbReference type="Pfam" id="PF00867">
    <property type="entry name" value="XPG_I"/>
    <property type="match status" value="1"/>
</dbReference>
<dbReference type="Pfam" id="PF00752">
    <property type="entry name" value="XPG_N"/>
    <property type="match status" value="1"/>
</dbReference>
<dbReference type="PRINTS" id="PR00853">
    <property type="entry name" value="XPGRADSUPER"/>
</dbReference>
<dbReference type="SMART" id="SM00475">
    <property type="entry name" value="53EXOc"/>
    <property type="match status" value="1"/>
</dbReference>
<dbReference type="SMART" id="SM00279">
    <property type="entry name" value="HhH2"/>
    <property type="match status" value="1"/>
</dbReference>
<dbReference type="SMART" id="SM00484">
    <property type="entry name" value="XPGI"/>
    <property type="match status" value="1"/>
</dbReference>
<dbReference type="SMART" id="SM00485">
    <property type="entry name" value="XPGN"/>
    <property type="match status" value="1"/>
</dbReference>
<dbReference type="SUPFAM" id="SSF47807">
    <property type="entry name" value="5' to 3' exonuclease, C-terminal subdomain"/>
    <property type="match status" value="1"/>
</dbReference>
<dbReference type="SUPFAM" id="SSF88723">
    <property type="entry name" value="PIN domain-like"/>
    <property type="match status" value="1"/>
</dbReference>
<dbReference type="PROSITE" id="PS00841">
    <property type="entry name" value="XPG_1"/>
    <property type="match status" value="1"/>
</dbReference>
<proteinExistence type="inferred from homology"/>
<reference key="1">
    <citation type="journal article" date="2005" name="Nature">
        <title>The genome of the protist parasite Entamoeba histolytica.</title>
        <authorList>
            <person name="Loftus B.J."/>
            <person name="Anderson I."/>
            <person name="Davies R."/>
            <person name="Alsmark U.C."/>
            <person name="Samuelson J."/>
            <person name="Amedeo P."/>
            <person name="Roncaglia P."/>
            <person name="Berriman M."/>
            <person name="Hirt R.P."/>
            <person name="Mann B.J."/>
            <person name="Nozaki T."/>
            <person name="Suh B."/>
            <person name="Pop M."/>
            <person name="Duchene M."/>
            <person name="Ackers J."/>
            <person name="Tannich E."/>
            <person name="Leippe M."/>
            <person name="Hofer M."/>
            <person name="Bruchhaus I."/>
            <person name="Willhoeft U."/>
            <person name="Bhattacharya A."/>
            <person name="Chillingworth T."/>
            <person name="Churcher C.M."/>
            <person name="Hance Z."/>
            <person name="Harris B."/>
            <person name="Harris D."/>
            <person name="Jagels K."/>
            <person name="Moule S."/>
            <person name="Mungall K.L."/>
            <person name="Ormond D."/>
            <person name="Squares R."/>
            <person name="Whitehead S."/>
            <person name="Quail M.A."/>
            <person name="Rabbinowitsch E."/>
            <person name="Norbertczak H."/>
            <person name="Price C."/>
            <person name="Wang Z."/>
            <person name="Guillen N."/>
            <person name="Gilchrist C."/>
            <person name="Stroup S.E."/>
            <person name="Bhattacharya S."/>
            <person name="Lohia A."/>
            <person name="Foster P.G."/>
            <person name="Sicheritz-Ponten T."/>
            <person name="Weber C."/>
            <person name="Singh U."/>
            <person name="Mukherjee C."/>
            <person name="El-Sayed N.M.A."/>
            <person name="Petri W.A."/>
            <person name="Clark C.G."/>
            <person name="Embley T.M."/>
            <person name="Barrell B.G."/>
            <person name="Fraser C.M."/>
            <person name="Hall N."/>
        </authorList>
    </citation>
    <scope>NUCLEOTIDE SEQUENCE [LARGE SCALE GENOMIC DNA]</scope>
    <source>
        <strain>ATCC 30459 / HM-1:IMSS / ABRM</strain>
    </source>
</reference>
<reference key="2">
    <citation type="journal article" date="2010" name="PLoS Negl. Trop. Dis.">
        <title>New assembly, reannotation and analysis of the Entamoeba histolytica genome reveal new genomic features and protein content information.</title>
        <authorList>
            <person name="Lorenzi H.A."/>
            <person name="Puiu D."/>
            <person name="Miller J.R."/>
            <person name="Brinkac L.M."/>
            <person name="Amedeo P."/>
            <person name="Hall N."/>
            <person name="Caler E.V."/>
        </authorList>
    </citation>
    <scope>GENOME REANNOTATION</scope>
    <source>
        <strain>ATCC 30459 / HM-1:IMSS / ABRM</strain>
    </source>
</reference>
<feature type="chain" id="PRO_0000403517" description="Flap endonuclease 1">
    <location>
        <begin position="1"/>
        <end position="376"/>
    </location>
</feature>
<feature type="region of interest" description="N-domain">
    <location>
        <begin position="1"/>
        <end position="105"/>
    </location>
</feature>
<feature type="region of interest" description="I-domain">
    <location>
        <begin position="123"/>
        <end position="254"/>
    </location>
</feature>
<feature type="region of interest" description="Interaction with PCNA" evidence="1">
    <location>
        <begin position="336"/>
        <end position="344"/>
    </location>
</feature>
<feature type="region of interest" description="Disordered" evidence="2">
    <location>
        <begin position="354"/>
        <end position="376"/>
    </location>
</feature>
<feature type="compositionally biased region" description="Basic residues" evidence="2">
    <location>
        <begin position="360"/>
        <end position="376"/>
    </location>
</feature>
<feature type="binding site" evidence="1">
    <location>
        <position position="34"/>
    </location>
    <ligand>
        <name>Mg(2+)</name>
        <dbReference type="ChEBI" id="CHEBI:18420"/>
        <label>1</label>
    </ligand>
</feature>
<feature type="binding site" evidence="1">
    <location>
        <position position="47"/>
    </location>
    <ligand>
        <name>DNA</name>
        <dbReference type="ChEBI" id="CHEBI:16991"/>
    </ligand>
</feature>
<feature type="binding site" evidence="1">
    <location>
        <position position="71"/>
    </location>
    <ligand>
        <name>DNA</name>
        <dbReference type="ChEBI" id="CHEBI:16991"/>
    </ligand>
</feature>
<feature type="binding site" evidence="1">
    <location>
        <position position="87"/>
    </location>
    <ligand>
        <name>Mg(2+)</name>
        <dbReference type="ChEBI" id="CHEBI:18420"/>
        <label>1</label>
    </ligand>
</feature>
<feature type="binding site" evidence="1">
    <location>
        <position position="159"/>
    </location>
    <ligand>
        <name>DNA</name>
        <dbReference type="ChEBI" id="CHEBI:16991"/>
    </ligand>
</feature>
<feature type="binding site" evidence="1">
    <location>
        <position position="159"/>
    </location>
    <ligand>
        <name>Mg(2+)</name>
        <dbReference type="ChEBI" id="CHEBI:18420"/>
        <label>1</label>
    </ligand>
</feature>
<feature type="binding site" evidence="1">
    <location>
        <position position="161"/>
    </location>
    <ligand>
        <name>Mg(2+)</name>
        <dbReference type="ChEBI" id="CHEBI:18420"/>
        <label>1</label>
    </ligand>
</feature>
<feature type="binding site" evidence="1">
    <location>
        <position position="180"/>
    </location>
    <ligand>
        <name>Mg(2+)</name>
        <dbReference type="ChEBI" id="CHEBI:18420"/>
        <label>2</label>
    </ligand>
</feature>
<feature type="binding site" evidence="1">
    <location>
        <position position="182"/>
    </location>
    <ligand>
        <name>Mg(2+)</name>
        <dbReference type="ChEBI" id="CHEBI:18420"/>
        <label>2</label>
    </ligand>
</feature>
<feature type="binding site" evidence="1">
    <location>
        <position position="232"/>
    </location>
    <ligand>
        <name>DNA</name>
        <dbReference type="ChEBI" id="CHEBI:16991"/>
    </ligand>
</feature>
<feature type="binding site" evidence="1">
    <location>
        <position position="234"/>
    </location>
    <ligand>
        <name>DNA</name>
        <dbReference type="ChEBI" id="CHEBI:16991"/>
    </ligand>
</feature>
<feature type="binding site" evidence="1">
    <location>
        <position position="234"/>
    </location>
    <ligand>
        <name>Mg(2+)</name>
        <dbReference type="ChEBI" id="CHEBI:18420"/>
        <label>2</label>
    </ligand>
</feature>
<organism>
    <name type="scientific">Entamoeba histolytica (strain ATCC 30459 / HM-1:IMSS / ABRM)</name>
    <dbReference type="NCBI Taxonomy" id="294381"/>
    <lineage>
        <taxon>Eukaryota</taxon>
        <taxon>Amoebozoa</taxon>
        <taxon>Evosea</taxon>
        <taxon>Archamoebae</taxon>
        <taxon>Mastigamoebida</taxon>
        <taxon>Entamoebidae</taxon>
        <taxon>Entamoeba</taxon>
    </lineage>
</organism>
<name>FEN1_ENTH1</name>
<comment type="function">
    <text evidence="1">Structure-specific nuclease with 5'-flap endonuclease and 5'-3' exonuclease activities involved in DNA replication and repair. During DNA replication, cleaves the 5'-overhanging flap structure that is generated by displacement synthesis when DNA polymerase encounters the 5'-end of a downstream Okazaki fragment. It enters the flap from the 5'-end and then tracks to cleave the flap base, leaving a nick for ligation. Also involved in the long patch base excision repair (LP-BER) pathway, by cleaving within the apurinic/apyrimidinic (AP) site-terminated flap. Acts as a genome stabilization factor that prevents flaps from equilibrating into structures that lead to duplications and deletions. Also possesses 5'-3' exonuclease activity on nicked or gapped double-stranded DNA, and exhibits RNase H activity. Also involved in replication and repair of rDNA and in repairing mitochondrial DNA.</text>
</comment>
<comment type="cofactor">
    <cofactor evidence="1">
        <name>Mg(2+)</name>
        <dbReference type="ChEBI" id="CHEBI:18420"/>
    </cofactor>
    <text evidence="1">Binds 2 magnesium ions per subunit. They probably participate in the reaction catalyzed by the enzyme. May bind an additional third magnesium ion after substrate binding.</text>
</comment>
<comment type="subunit">
    <text evidence="1">Interacts with PCNA. Three molecules of FEN1 bind to one PCNA trimer with each molecule binding to one PCNA monomer. PCNA stimulates the nuclease activity without altering cleavage specificity.</text>
</comment>
<comment type="subcellular location">
    <subcellularLocation>
        <location evidence="1">Nucleus</location>
        <location evidence="1">Nucleolus</location>
    </subcellularLocation>
    <subcellularLocation>
        <location evidence="1">Nucleus</location>
        <location evidence="1">Nucleoplasm</location>
    </subcellularLocation>
    <subcellularLocation>
        <location evidence="1">Mitochondrion</location>
    </subcellularLocation>
    <text evidence="1">Resides mostly in the nucleoli and relocalizes to the nucleoplasm upon DNA damage.</text>
</comment>
<comment type="PTM">
    <text evidence="1">Phosphorylated. Phosphorylation upon DNA damage induces relocalization to the nuclear plasma.</text>
</comment>
<comment type="similarity">
    <text evidence="1">Belongs to the XPG/RAD2 endonuclease family. FEN1 subfamily.</text>
</comment>
<protein>
    <recommendedName>
        <fullName evidence="1">Flap endonuclease 1</fullName>
        <shortName evidence="1">FEN-1</shortName>
        <ecNumber evidence="1">3.1.-.-</ecNumber>
    </recommendedName>
    <alternativeName>
        <fullName evidence="1">Flap structure-specific endonuclease 1</fullName>
    </alternativeName>
</protein>
<keyword id="KW-0227">DNA damage</keyword>
<keyword id="KW-0234">DNA repair</keyword>
<keyword id="KW-0235">DNA replication</keyword>
<keyword id="KW-0255">Endonuclease</keyword>
<keyword id="KW-0269">Exonuclease</keyword>
<keyword id="KW-0378">Hydrolase</keyword>
<keyword id="KW-0460">Magnesium</keyword>
<keyword id="KW-0479">Metal-binding</keyword>
<keyword id="KW-0496">Mitochondrion</keyword>
<keyword id="KW-0540">Nuclease</keyword>
<keyword id="KW-0539">Nucleus</keyword>
<keyword id="KW-0597">Phosphoprotein</keyword>
<keyword id="KW-1185">Reference proteome</keyword>
<accession>C4M6G8</accession>
<gene>
    <name evidence="1" type="primary">FEN1</name>
    <name type="ORF">EHI_099740</name>
</gene>